<feature type="chain" id="PRO_0000183990" description="Synaptogyrin-1">
    <location>
        <begin position="1"/>
        <end position="233"/>
    </location>
</feature>
<feature type="topological domain" description="Cytoplasmic" evidence="2">
    <location>
        <begin position="1"/>
        <end position="23"/>
    </location>
</feature>
<feature type="transmembrane region" description="Helical" evidence="3">
    <location>
        <begin position="24"/>
        <end position="44"/>
    </location>
</feature>
<feature type="topological domain" description="Lumenal" evidence="2">
    <location>
        <begin position="45"/>
        <end position="71"/>
    </location>
</feature>
<feature type="transmembrane region" description="Helical" evidence="3">
    <location>
        <begin position="72"/>
        <end position="92"/>
    </location>
</feature>
<feature type="topological domain" description="Cytoplasmic" evidence="2">
    <location>
        <begin position="93"/>
        <end position="103"/>
    </location>
</feature>
<feature type="transmembrane region" description="Helical" evidence="3">
    <location>
        <begin position="104"/>
        <end position="124"/>
    </location>
</feature>
<feature type="topological domain" description="Lumenal" evidence="2">
    <location>
        <begin position="125"/>
        <end position="148"/>
    </location>
</feature>
<feature type="transmembrane region" description="Helical" evidence="3">
    <location>
        <begin position="149"/>
        <end position="169"/>
    </location>
</feature>
<feature type="topological domain" description="Cytoplasmic" evidence="2">
    <location>
        <begin position="170"/>
        <end position="233"/>
    </location>
</feature>
<feature type="domain" description="MARVEL" evidence="4">
    <location>
        <begin position="20"/>
        <end position="173"/>
    </location>
</feature>
<feature type="region of interest" description="Disordered" evidence="5">
    <location>
        <begin position="194"/>
        <end position="233"/>
    </location>
</feature>
<feature type="compositionally biased region" description="Polar residues" evidence="5">
    <location>
        <begin position="213"/>
        <end position="233"/>
    </location>
</feature>
<feature type="modified residue" description="N-acetylmethionine" evidence="16">
    <location>
        <position position="1"/>
    </location>
</feature>
<feature type="splice variant" id="VSP_006331" description="In isoform 1C." evidence="12">
    <original>MEGGAYGAGKAGGAFDPYTLVRQPHTILRVVSW</original>
    <variation>MLTLEFGILEFDPSWIGSWTQRSWVSWRSRPGCE</variation>
    <location>
        <begin position="1"/>
        <end position="33"/>
    </location>
</feature>
<feature type="splice variant" id="VSP_006332" description="In isoform 1B and isoform 1C." evidence="11 12 13">
    <original>AGQAVLAFQRYQIGADSALFSQDYMDPSQDSSMPYAPYVEPTGPDPAGMGGTYQQPANTFDTEPQGYQSQGY</original>
    <variation>SLTAALAVRRFKDLSFQEEYSTLFPASAQP</variation>
    <location>
        <begin position="162"/>
        <end position="233"/>
    </location>
</feature>
<feature type="sequence variant" id="VAR_060489" evidence="6 7 8 10">
    <original>P</original>
    <variation>PN</variation>
    <location>
        <position position="202"/>
    </location>
</feature>
<feature type="sequence variant" id="VAR_060490" description="In a patient affected by schizophrenia." evidence="8">
    <original>D</original>
    <variation>G</variation>
    <location>
        <position position="222"/>
    </location>
</feature>
<feature type="turn" evidence="17">
    <location>
        <begin position="17"/>
        <end position="19"/>
    </location>
</feature>
<feature type="helix" evidence="17">
    <location>
        <begin position="20"/>
        <end position="22"/>
    </location>
</feature>
<feature type="helix" evidence="17">
    <location>
        <begin position="24"/>
        <end position="46"/>
    </location>
</feature>
<feature type="helix" evidence="17">
    <location>
        <begin position="48"/>
        <end position="53"/>
    </location>
</feature>
<feature type="turn" evidence="17">
    <location>
        <begin position="57"/>
        <end position="59"/>
    </location>
</feature>
<feature type="helix" evidence="17">
    <location>
        <begin position="63"/>
        <end position="90"/>
    </location>
</feature>
<feature type="helix" evidence="17">
    <location>
        <begin position="98"/>
        <end position="133"/>
    </location>
</feature>
<feature type="helix" evidence="17">
    <location>
        <begin position="140"/>
        <end position="142"/>
    </location>
</feature>
<feature type="helix" evidence="17">
    <location>
        <begin position="145"/>
        <end position="173"/>
    </location>
</feature>
<gene>
    <name evidence="15" type="primary">SYNGR1</name>
</gene>
<proteinExistence type="evidence at protein level"/>
<reference key="1">
    <citation type="journal article" date="1998" name="Hum. Genet.">
        <title>Characterization of the human synaptogyrin gene family.</title>
        <authorList>
            <person name="Kedra D."/>
            <person name="Pan H.-Q."/>
            <person name="Seroussi E."/>
            <person name="Fransson I."/>
            <person name="Guilbaud C."/>
            <person name="Collins J.E."/>
            <person name="Dunham I."/>
            <person name="Blennow E."/>
            <person name="Roe B.A."/>
            <person name="Piehl F."/>
            <person name="Dumanski J.P."/>
        </authorList>
    </citation>
    <scope>NUCLEOTIDE SEQUENCE [MRNA] (ISOFORMS 1A; 1B AND 1C)</scope>
    <scope>VARIANT ASN-202 INS</scope>
</reference>
<reference key="2">
    <citation type="journal article" date="2004" name="Genome Biol.">
        <title>A genome annotation-driven approach to cloning the human ORFeome.</title>
        <authorList>
            <person name="Collins J.E."/>
            <person name="Wright C.L."/>
            <person name="Edwards C.A."/>
            <person name="Davis M.P."/>
            <person name="Grinham J.A."/>
            <person name="Cole C.G."/>
            <person name="Goward M.E."/>
            <person name="Aguado B."/>
            <person name="Mallya M."/>
            <person name="Mokrab Y."/>
            <person name="Huckle E.J."/>
            <person name="Beare D.M."/>
            <person name="Dunham I."/>
        </authorList>
    </citation>
    <scope>NUCLEOTIDE SEQUENCE [LARGE SCALE MRNA] (ISOFORM 1A)</scope>
    <scope>VARIANT ASN-202 INS</scope>
</reference>
<reference key="3">
    <citation type="submission" date="2003-05" db="EMBL/GenBank/DDBJ databases">
        <title>Cloning of human full-length CDSs in BD Creator(TM) system donor vector.</title>
        <authorList>
            <person name="Kalnine N."/>
            <person name="Chen X."/>
            <person name="Rolfs A."/>
            <person name="Halleck A."/>
            <person name="Hines L."/>
            <person name="Eisenstein S."/>
            <person name="Koundinya M."/>
            <person name="Raphael J."/>
            <person name="Moreira D."/>
            <person name="Kelley T."/>
            <person name="LaBaer J."/>
            <person name="Lin Y."/>
            <person name="Phelan M."/>
            <person name="Farmer A."/>
        </authorList>
    </citation>
    <scope>NUCLEOTIDE SEQUENCE [LARGE SCALE MRNA] (ISOFORM 1B)</scope>
</reference>
<reference key="4">
    <citation type="journal article" date="2004" name="Nat. Genet.">
        <title>Complete sequencing and characterization of 21,243 full-length human cDNAs.</title>
        <authorList>
            <person name="Ota T."/>
            <person name="Suzuki Y."/>
            <person name="Nishikawa T."/>
            <person name="Otsuki T."/>
            <person name="Sugiyama T."/>
            <person name="Irie R."/>
            <person name="Wakamatsu A."/>
            <person name="Hayashi K."/>
            <person name="Sato H."/>
            <person name="Nagai K."/>
            <person name="Kimura K."/>
            <person name="Makita H."/>
            <person name="Sekine M."/>
            <person name="Obayashi M."/>
            <person name="Nishi T."/>
            <person name="Shibahara T."/>
            <person name="Tanaka T."/>
            <person name="Ishii S."/>
            <person name="Yamamoto J."/>
            <person name="Saito K."/>
            <person name="Kawai Y."/>
            <person name="Isono Y."/>
            <person name="Nakamura Y."/>
            <person name="Nagahari K."/>
            <person name="Murakami K."/>
            <person name="Yasuda T."/>
            <person name="Iwayanagi T."/>
            <person name="Wagatsuma M."/>
            <person name="Shiratori A."/>
            <person name="Sudo H."/>
            <person name="Hosoiri T."/>
            <person name="Kaku Y."/>
            <person name="Kodaira H."/>
            <person name="Kondo H."/>
            <person name="Sugawara M."/>
            <person name="Takahashi M."/>
            <person name="Kanda K."/>
            <person name="Yokoi T."/>
            <person name="Furuya T."/>
            <person name="Kikkawa E."/>
            <person name="Omura Y."/>
            <person name="Abe K."/>
            <person name="Kamihara K."/>
            <person name="Katsuta N."/>
            <person name="Sato K."/>
            <person name="Tanikawa M."/>
            <person name="Yamazaki M."/>
            <person name="Ninomiya K."/>
            <person name="Ishibashi T."/>
            <person name="Yamashita H."/>
            <person name="Murakawa K."/>
            <person name="Fujimori K."/>
            <person name="Tanai H."/>
            <person name="Kimata M."/>
            <person name="Watanabe M."/>
            <person name="Hiraoka S."/>
            <person name="Chiba Y."/>
            <person name="Ishida S."/>
            <person name="Ono Y."/>
            <person name="Takiguchi S."/>
            <person name="Watanabe S."/>
            <person name="Yosida M."/>
            <person name="Hotuta T."/>
            <person name="Kusano J."/>
            <person name="Kanehori K."/>
            <person name="Takahashi-Fujii A."/>
            <person name="Hara H."/>
            <person name="Tanase T.-O."/>
            <person name="Nomura Y."/>
            <person name="Togiya S."/>
            <person name="Komai F."/>
            <person name="Hara R."/>
            <person name="Takeuchi K."/>
            <person name="Arita M."/>
            <person name="Imose N."/>
            <person name="Musashino K."/>
            <person name="Yuuki H."/>
            <person name="Oshima A."/>
            <person name="Sasaki N."/>
            <person name="Aotsuka S."/>
            <person name="Yoshikawa Y."/>
            <person name="Matsunawa H."/>
            <person name="Ichihara T."/>
            <person name="Shiohata N."/>
            <person name="Sano S."/>
            <person name="Moriya S."/>
            <person name="Momiyama H."/>
            <person name="Satoh N."/>
            <person name="Takami S."/>
            <person name="Terashima Y."/>
            <person name="Suzuki O."/>
            <person name="Nakagawa S."/>
            <person name="Senoh A."/>
            <person name="Mizoguchi H."/>
            <person name="Goto Y."/>
            <person name="Shimizu F."/>
            <person name="Wakebe H."/>
            <person name="Hishigaki H."/>
            <person name="Watanabe T."/>
            <person name="Sugiyama A."/>
            <person name="Takemoto M."/>
            <person name="Kawakami B."/>
            <person name="Yamazaki M."/>
            <person name="Watanabe K."/>
            <person name="Kumagai A."/>
            <person name="Itakura S."/>
            <person name="Fukuzumi Y."/>
            <person name="Fujimori Y."/>
            <person name="Komiyama M."/>
            <person name="Tashiro H."/>
            <person name="Tanigami A."/>
            <person name="Fujiwara T."/>
            <person name="Ono T."/>
            <person name="Yamada K."/>
            <person name="Fujii Y."/>
            <person name="Ozaki K."/>
            <person name="Hirao M."/>
            <person name="Ohmori Y."/>
            <person name="Kawabata A."/>
            <person name="Hikiji T."/>
            <person name="Kobatake N."/>
            <person name="Inagaki H."/>
            <person name="Ikema Y."/>
            <person name="Okamoto S."/>
            <person name="Okitani R."/>
            <person name="Kawakami T."/>
            <person name="Noguchi S."/>
            <person name="Itoh T."/>
            <person name="Shigeta K."/>
            <person name="Senba T."/>
            <person name="Matsumura K."/>
            <person name="Nakajima Y."/>
            <person name="Mizuno T."/>
            <person name="Morinaga M."/>
            <person name="Sasaki M."/>
            <person name="Togashi T."/>
            <person name="Oyama M."/>
            <person name="Hata H."/>
            <person name="Watanabe M."/>
            <person name="Komatsu T."/>
            <person name="Mizushima-Sugano J."/>
            <person name="Satoh T."/>
            <person name="Shirai Y."/>
            <person name="Takahashi Y."/>
            <person name="Nakagawa K."/>
            <person name="Okumura K."/>
            <person name="Nagase T."/>
            <person name="Nomura N."/>
            <person name="Kikuchi H."/>
            <person name="Masuho Y."/>
            <person name="Yamashita R."/>
            <person name="Nakai K."/>
            <person name="Yada T."/>
            <person name="Nakamura Y."/>
            <person name="Ohara O."/>
            <person name="Isogai T."/>
            <person name="Sugano S."/>
        </authorList>
    </citation>
    <scope>NUCLEOTIDE SEQUENCE [LARGE SCALE MRNA] (ISOFORM 1A)</scope>
    <scope>VARIANT ASN-202 INS</scope>
    <source>
        <tissue>Cerebellum</tissue>
    </source>
</reference>
<reference key="5">
    <citation type="journal article" date="1999" name="Nature">
        <title>The DNA sequence of human chromosome 22.</title>
        <authorList>
            <person name="Dunham I."/>
            <person name="Hunt A.R."/>
            <person name="Collins J.E."/>
            <person name="Bruskiewich R."/>
            <person name="Beare D.M."/>
            <person name="Clamp M."/>
            <person name="Smink L.J."/>
            <person name="Ainscough R."/>
            <person name="Almeida J.P."/>
            <person name="Babbage A.K."/>
            <person name="Bagguley C."/>
            <person name="Bailey J."/>
            <person name="Barlow K.F."/>
            <person name="Bates K.N."/>
            <person name="Beasley O.P."/>
            <person name="Bird C.P."/>
            <person name="Blakey S.E."/>
            <person name="Bridgeman A.M."/>
            <person name="Buck D."/>
            <person name="Burgess J."/>
            <person name="Burrill W.D."/>
            <person name="Burton J."/>
            <person name="Carder C."/>
            <person name="Carter N.P."/>
            <person name="Chen Y."/>
            <person name="Clark G."/>
            <person name="Clegg S.M."/>
            <person name="Cobley V.E."/>
            <person name="Cole C.G."/>
            <person name="Collier R.E."/>
            <person name="Connor R."/>
            <person name="Conroy D."/>
            <person name="Corby N.R."/>
            <person name="Coville G.J."/>
            <person name="Cox A.V."/>
            <person name="Davis J."/>
            <person name="Dawson E."/>
            <person name="Dhami P.D."/>
            <person name="Dockree C."/>
            <person name="Dodsworth S.J."/>
            <person name="Durbin R.M."/>
            <person name="Ellington A.G."/>
            <person name="Evans K.L."/>
            <person name="Fey J.M."/>
            <person name="Fleming K."/>
            <person name="French L."/>
            <person name="Garner A.A."/>
            <person name="Gilbert J.G.R."/>
            <person name="Goward M.E."/>
            <person name="Grafham D.V."/>
            <person name="Griffiths M.N.D."/>
            <person name="Hall C."/>
            <person name="Hall R.E."/>
            <person name="Hall-Tamlyn G."/>
            <person name="Heathcott R.W."/>
            <person name="Ho S."/>
            <person name="Holmes S."/>
            <person name="Hunt S.E."/>
            <person name="Jones M.C."/>
            <person name="Kershaw J."/>
            <person name="Kimberley A.M."/>
            <person name="King A."/>
            <person name="Laird G.K."/>
            <person name="Langford C.F."/>
            <person name="Leversha M.A."/>
            <person name="Lloyd C."/>
            <person name="Lloyd D.M."/>
            <person name="Martyn I.D."/>
            <person name="Mashreghi-Mohammadi M."/>
            <person name="Matthews L.H."/>
            <person name="Mccann O.T."/>
            <person name="Mcclay J."/>
            <person name="Mclaren S."/>
            <person name="McMurray A.A."/>
            <person name="Milne S.A."/>
            <person name="Mortimore B.J."/>
            <person name="Odell C.N."/>
            <person name="Pavitt R."/>
            <person name="Pearce A.V."/>
            <person name="Pearson D."/>
            <person name="Phillimore B.J.C.T."/>
            <person name="Phillips S.H."/>
            <person name="Plumb R.W."/>
            <person name="Ramsay H."/>
            <person name="Ramsey Y."/>
            <person name="Rogers L."/>
            <person name="Ross M.T."/>
            <person name="Scott C.E."/>
            <person name="Sehra H.K."/>
            <person name="Skuce C.D."/>
            <person name="Smalley S."/>
            <person name="Smith M.L."/>
            <person name="Soderlund C."/>
            <person name="Spragon L."/>
            <person name="Steward C.A."/>
            <person name="Sulston J.E."/>
            <person name="Swann R.M."/>
            <person name="Vaudin M."/>
            <person name="Wall M."/>
            <person name="Wallis J.M."/>
            <person name="Whiteley M.N."/>
            <person name="Willey D.L."/>
            <person name="Williams L."/>
            <person name="Williams S.A."/>
            <person name="Williamson H."/>
            <person name="Wilmer T.E."/>
            <person name="Wilming L."/>
            <person name="Wright C.L."/>
            <person name="Hubbard T."/>
            <person name="Bentley D.R."/>
            <person name="Beck S."/>
            <person name="Rogers J."/>
            <person name="Shimizu N."/>
            <person name="Minoshima S."/>
            <person name="Kawasaki K."/>
            <person name="Sasaki T."/>
            <person name="Asakawa S."/>
            <person name="Kudoh J."/>
            <person name="Shintani A."/>
            <person name="Shibuya K."/>
            <person name="Yoshizaki Y."/>
            <person name="Aoki N."/>
            <person name="Mitsuyama S."/>
            <person name="Roe B.A."/>
            <person name="Chen F."/>
            <person name="Chu L."/>
            <person name="Crabtree J."/>
            <person name="Deschamps S."/>
            <person name="Do A."/>
            <person name="Do T."/>
            <person name="Dorman A."/>
            <person name="Fang F."/>
            <person name="Fu Y."/>
            <person name="Hu P."/>
            <person name="Hua A."/>
            <person name="Kenton S."/>
            <person name="Lai H."/>
            <person name="Lao H.I."/>
            <person name="Lewis J."/>
            <person name="Lewis S."/>
            <person name="Lin S.-P."/>
            <person name="Loh P."/>
            <person name="Malaj E."/>
            <person name="Nguyen T."/>
            <person name="Pan H."/>
            <person name="Phan S."/>
            <person name="Qi S."/>
            <person name="Qian Y."/>
            <person name="Ray L."/>
            <person name="Ren Q."/>
            <person name="Shaull S."/>
            <person name="Sloan D."/>
            <person name="Song L."/>
            <person name="Wang Q."/>
            <person name="Wang Y."/>
            <person name="Wang Z."/>
            <person name="White J."/>
            <person name="Willingham D."/>
            <person name="Wu H."/>
            <person name="Yao Z."/>
            <person name="Zhan M."/>
            <person name="Zhang G."/>
            <person name="Chissoe S."/>
            <person name="Murray J."/>
            <person name="Miller N."/>
            <person name="Minx P."/>
            <person name="Fulton R."/>
            <person name="Johnson D."/>
            <person name="Bemis G."/>
            <person name="Bentley D."/>
            <person name="Bradshaw H."/>
            <person name="Bourne S."/>
            <person name="Cordes M."/>
            <person name="Du Z."/>
            <person name="Fulton L."/>
            <person name="Goela D."/>
            <person name="Graves T."/>
            <person name="Hawkins J."/>
            <person name="Hinds K."/>
            <person name="Kemp K."/>
            <person name="Latreille P."/>
            <person name="Layman D."/>
            <person name="Ozersky P."/>
            <person name="Rohlfing T."/>
            <person name="Scheet P."/>
            <person name="Walker C."/>
            <person name="Wamsley A."/>
            <person name="Wohldmann P."/>
            <person name="Pepin K."/>
            <person name="Nelson J."/>
            <person name="Korf I."/>
            <person name="Bedell J.A."/>
            <person name="Hillier L.W."/>
            <person name="Mardis E."/>
            <person name="Waterston R."/>
            <person name="Wilson R."/>
            <person name="Emanuel B.S."/>
            <person name="Shaikh T."/>
            <person name="Kurahashi H."/>
            <person name="Saitta S."/>
            <person name="Budarf M.L."/>
            <person name="McDermid H.E."/>
            <person name="Johnson A."/>
            <person name="Wong A.C.C."/>
            <person name="Morrow B.E."/>
            <person name="Edelmann L."/>
            <person name="Kim U.J."/>
            <person name="Shizuya H."/>
            <person name="Simon M.I."/>
            <person name="Dumanski J.P."/>
            <person name="Peyrard M."/>
            <person name="Kedra D."/>
            <person name="Seroussi E."/>
            <person name="Fransson I."/>
            <person name="Tapia I."/>
            <person name="Bruder C.E."/>
            <person name="O'Brien K.P."/>
            <person name="Wilkinson P."/>
            <person name="Bodenteich A."/>
            <person name="Hartman K."/>
            <person name="Hu X."/>
            <person name="Khan A.S."/>
            <person name="Lane L."/>
            <person name="Tilahun Y."/>
            <person name="Wright H."/>
        </authorList>
    </citation>
    <scope>NUCLEOTIDE SEQUENCE [LARGE SCALE GENOMIC DNA]</scope>
</reference>
<reference key="6">
    <citation type="journal article" date="2004" name="Genome Res.">
        <title>The status, quality, and expansion of the NIH full-length cDNA project: the Mammalian Gene Collection (MGC).</title>
        <authorList>
            <consortium name="The MGC Project Team"/>
        </authorList>
    </citation>
    <scope>NUCLEOTIDE SEQUENCE [LARGE SCALE MRNA] (ISOFORM 1B)</scope>
    <source>
        <tissue>Brain</tissue>
    </source>
</reference>
<reference key="7">
    <citation type="journal article" date="2006" name="J. Proteome Res.">
        <title>Proteomic and bioinformatic characterization of the biogenesis and function of melanosomes.</title>
        <authorList>
            <person name="Chi A."/>
            <person name="Valencia J.C."/>
            <person name="Hu Z.-Z."/>
            <person name="Watabe H."/>
            <person name="Yamaguchi H."/>
            <person name="Mangini N.J."/>
            <person name="Huang H."/>
            <person name="Canfield V.A."/>
            <person name="Cheng K.C."/>
            <person name="Yang F."/>
            <person name="Abe R."/>
            <person name="Yamagishi S."/>
            <person name="Shabanowitz J."/>
            <person name="Hearing V.J."/>
            <person name="Wu C."/>
            <person name="Appella E."/>
            <person name="Hunt D.F."/>
        </authorList>
    </citation>
    <scope>SUBCELLULAR LOCATION [LARGE SCALE ANALYSIS]</scope>
    <source>
        <tissue>Melanoma</tissue>
    </source>
</reference>
<reference key="8">
    <citation type="journal article" date="2009" name="Anal. Chem.">
        <title>Lys-N and trypsin cover complementary parts of the phosphoproteome in a refined SCX-based approach.</title>
        <authorList>
            <person name="Gauci S."/>
            <person name="Helbig A.O."/>
            <person name="Slijper M."/>
            <person name="Krijgsveld J."/>
            <person name="Heck A.J."/>
            <person name="Mohammed S."/>
        </authorList>
    </citation>
    <scope>ACETYLATION [LARGE SCALE ANALYSIS] AT MET-1</scope>
    <scope>IDENTIFICATION BY MASS SPECTROMETRY [LARGE SCALE ANALYSIS]</scope>
</reference>
<reference key="9">
    <citation type="journal article" date="2007" name="J. Psychiatr. Res.">
        <title>Identification of rare mutations of synaptogyrin 1 gene in patients with schizophrenia.</title>
        <authorList>
            <person name="Cheng M.C."/>
            <person name="Chen C.H."/>
        </authorList>
    </citation>
    <scope>VARIANTS ASN-202 INS AND GLY-222</scope>
</reference>
<sequence length="233" mass="25456">MEGGAYGAGKAGGAFDPYTLVRQPHTILRVVSWLFSIVVFGSIVNEGYLNSASEGEEFCIYNRNPNACSYGVAVGVLAFLTCLLYLALDVYFPQISSVKDRKKAVLSDIGVSAFWAFLWFVGFCYLANQWQVSKPKDNPLNEGTDAARAAIAFSFFSIFTWAGQAVLAFQRYQIGADSALFSQDYMDPSQDSSMPYAPYVEPTGPDPAGMGGTYQQPANTFDTEPQGYQSQGY</sequence>
<keyword id="KW-0002">3D-structure</keyword>
<keyword id="KW-0007">Acetylation</keyword>
<keyword id="KW-0025">Alternative splicing</keyword>
<keyword id="KW-0968">Cytoplasmic vesicle</keyword>
<keyword id="KW-0472">Membrane</keyword>
<keyword id="KW-1267">Proteomics identification</keyword>
<keyword id="KW-1185">Reference proteome</keyword>
<keyword id="KW-0770">Synapse</keyword>
<keyword id="KW-0812">Transmembrane</keyword>
<keyword id="KW-1133">Transmembrane helix</keyword>
<name>SNG1_HUMAN</name>
<comment type="function">
    <text evidence="1 2">May play a role in regulated exocytosis. Modulates the localization of synaptophysin/SYP into synaptic-like microvesicles and may therefore play a role in synaptic-like microvesicle formation and/or maturation (By similarity). Involved in the regulation of short-term and long-term synaptic plasticity (By similarity).</text>
</comment>
<comment type="interaction">
    <interactant intactId="EBI-6269521">
        <id>O43759</id>
    </interactant>
    <interactant intactId="EBI-743099">
        <id>Q969F0</id>
        <label>FATE1</label>
    </interactant>
    <organismsDiffer>false</organismsDiffer>
    <experiments>3</experiments>
</comment>
<comment type="interaction">
    <interactant intactId="EBI-12187159">
        <id>O43759-2</id>
    </interactant>
    <interactant intactId="EBI-2902702">
        <id>P29274</id>
        <label>ADORA2A</label>
    </interactant>
    <organismsDiffer>false</organismsDiffer>
    <experiments>3</experiments>
</comment>
<comment type="interaction">
    <interactant intactId="EBI-12187159">
        <id>O43759-2</id>
    </interactant>
    <interactant intactId="EBI-13059134">
        <id>Q13520</id>
        <label>AQP6</label>
    </interactant>
    <organismsDiffer>false</organismsDiffer>
    <experiments>3</experiments>
</comment>
<comment type="interaction">
    <interactant intactId="EBI-12187159">
        <id>O43759-2</id>
    </interactant>
    <interactant intactId="EBI-625022">
        <id>O43889-2</id>
        <label>CREB3</label>
    </interactant>
    <organismsDiffer>false</organismsDiffer>
    <experiments>3</experiments>
</comment>
<comment type="interaction">
    <interactant intactId="EBI-12187159">
        <id>O43759-2</id>
    </interactant>
    <interactant intactId="EBI-6942903">
        <id>Q96BA8</id>
        <label>CREB3L1</label>
    </interactant>
    <organismsDiffer>false</organismsDiffer>
    <experiments>3</experiments>
</comment>
<comment type="interaction">
    <interactant intactId="EBI-12187159">
        <id>O43759-2</id>
    </interactant>
    <interactant intactId="EBI-3915253">
        <id>Q15125</id>
        <label>EBP</label>
    </interactant>
    <organismsDiffer>false</organismsDiffer>
    <experiments>3</experiments>
</comment>
<comment type="interaction">
    <interactant intactId="EBI-12187159">
        <id>O43759-2</id>
    </interactant>
    <interactant intactId="EBI-2339219">
        <id>Q08426</id>
        <label>EHHADH</label>
    </interactant>
    <organismsDiffer>false</organismsDiffer>
    <experiments>3</experiments>
</comment>
<comment type="interaction">
    <interactant intactId="EBI-12187159">
        <id>O43759-2</id>
    </interactant>
    <interactant intactId="EBI-781551">
        <id>Q9Y282</id>
        <label>ERGIC3</label>
    </interactant>
    <organismsDiffer>false</organismsDiffer>
    <experiments>3</experiments>
</comment>
<comment type="interaction">
    <interactant intactId="EBI-12187159">
        <id>O43759-2</id>
    </interactant>
    <interactant intactId="EBI-18304435">
        <id>Q5JX71</id>
        <label>FAM209A</label>
    </interactant>
    <organismsDiffer>false</organismsDiffer>
    <experiments>3</experiments>
</comment>
<comment type="interaction">
    <interactant intactId="EBI-12187159">
        <id>O43759-2</id>
    </interactant>
    <interactant intactId="EBI-743099">
        <id>Q969F0</id>
        <label>FATE1</label>
    </interactant>
    <organismsDiffer>false</organismsDiffer>
    <experiments>6</experiments>
</comment>
<comment type="interaction">
    <interactant intactId="EBI-12187159">
        <id>O43759-2</id>
    </interactant>
    <interactant intactId="EBI-18076404">
        <id>O15529</id>
        <label>GPR42</label>
    </interactant>
    <organismsDiffer>false</organismsDiffer>
    <experiments>3</experiments>
</comment>
<comment type="interaction">
    <interactant intactId="EBI-12187159">
        <id>O43759-2</id>
    </interactant>
    <interactant intactId="EBI-17186025">
        <id>O00219-2</id>
        <label>HAS3</label>
    </interactant>
    <organismsDiffer>false</organismsDiffer>
    <experiments>3</experiments>
</comment>
<comment type="interaction">
    <interactant intactId="EBI-12187159">
        <id>O43759-2</id>
    </interactant>
    <interactant intactId="EBI-15672507">
        <id>O15243</id>
        <label>LEPROT</label>
    </interactant>
    <organismsDiffer>false</organismsDiffer>
    <experiments>3</experiments>
</comment>
<comment type="interaction">
    <interactant intactId="EBI-12187159">
        <id>O43759-2</id>
    </interactant>
    <interactant intactId="EBI-7825321">
        <id>Q96E29</id>
        <label>MTERF3</label>
    </interactant>
    <organismsDiffer>false</organismsDiffer>
    <experiments>3</experiments>
</comment>
<comment type="interaction">
    <interactant intactId="EBI-12187159">
        <id>O43759-2</id>
    </interactant>
    <interactant intactId="EBI-709754">
        <id>Q9HB07</id>
        <label>MYG1</label>
    </interactant>
    <organismsDiffer>false</organismsDiffer>
    <experiments>3</experiments>
</comment>
<comment type="interaction">
    <interactant intactId="EBI-12187159">
        <id>O43759-2</id>
    </interactant>
    <interactant intactId="EBI-11978907">
        <id>Q9ULP0-2</id>
        <label>NDRG4</label>
    </interactant>
    <organismsDiffer>false</organismsDiffer>
    <experiments>3</experiments>
</comment>
<comment type="interaction">
    <interactant intactId="EBI-12187159">
        <id>O43759-2</id>
    </interactant>
    <interactant intactId="EBI-373552">
        <id>Q96CS7</id>
        <label>PLEKHB2</label>
    </interactant>
    <organismsDiffer>false</organismsDiffer>
    <experiments>3</experiments>
</comment>
<comment type="interaction">
    <interactant intactId="EBI-12187159">
        <id>O43759-2</id>
    </interactant>
    <interactant intactId="EBI-725795">
        <id>O60664</id>
        <label>PLIN3</label>
    </interactant>
    <organismsDiffer>false</organismsDiffer>
    <experiments>3</experiments>
</comment>
<comment type="interaction">
    <interactant intactId="EBI-12187159">
        <id>O43759-2</id>
    </interactant>
    <interactant intactId="EBI-1045072">
        <id>Q96T60</id>
        <label>PNKP</label>
    </interactant>
    <organismsDiffer>false</organismsDiffer>
    <experiments>3</experiments>
</comment>
<comment type="interaction">
    <interactant intactId="EBI-12187159">
        <id>O43759-2</id>
    </interactant>
    <interactant intactId="EBI-10192441">
        <id>Q86VR2</id>
        <label>RETREG3</label>
    </interactant>
    <organismsDiffer>false</organismsDiffer>
    <experiments>3</experiments>
</comment>
<comment type="interaction">
    <interactant intactId="EBI-12187159">
        <id>O43759-2</id>
    </interactant>
    <interactant intactId="EBI-727004">
        <id>O00560</id>
        <label>SDCBP</label>
    </interactant>
    <organismsDiffer>false</organismsDiffer>
    <experiments>3</experiments>
</comment>
<comment type="interaction">
    <interactant intactId="EBI-12187159">
        <id>O43759-2</id>
    </interactant>
    <interactant intactId="EBI-18159983">
        <id>Q3KNW5</id>
        <label>SLC10A6</label>
    </interactant>
    <organismsDiffer>false</organismsDiffer>
    <experiments>3</experiments>
</comment>
<comment type="interaction">
    <interactant intactId="EBI-12187159">
        <id>O43759-2</id>
    </interactant>
    <interactant intactId="EBI-2822329">
        <id>Q13596</id>
        <label>SNX1</label>
    </interactant>
    <organismsDiffer>false</organismsDiffer>
    <experiments>3</experiments>
</comment>
<comment type="interaction">
    <interactant intactId="EBI-12187159">
        <id>O43759-2</id>
    </interactant>
    <interactant intactId="EBI-742688">
        <id>Q9NZD8</id>
        <label>SPG21</label>
    </interactant>
    <organismsDiffer>false</organismsDiffer>
    <experiments>3</experiments>
</comment>
<comment type="interaction">
    <interactant intactId="EBI-12187159">
        <id>O43759-2</id>
    </interactant>
    <interactant intactId="EBI-17848320">
        <id>Q6ZMD2-2</id>
        <label>SPNS3</label>
    </interactant>
    <organismsDiffer>false</organismsDiffer>
    <experiments>3</experiments>
</comment>
<comment type="interaction">
    <interactant intactId="EBI-12187159">
        <id>O43759-2</id>
    </interactant>
    <interactant intactId="EBI-8638294">
        <id>Q9NUH8</id>
        <label>TMEM14B</label>
    </interactant>
    <organismsDiffer>false</organismsDiffer>
    <experiments>3</experiments>
</comment>
<comment type="interaction">
    <interactant intactId="EBI-12187159">
        <id>O43759-2</id>
    </interactant>
    <interactant intactId="EBI-3923061">
        <id>Q96B21</id>
        <label>TMEM45B</label>
    </interactant>
    <organismsDiffer>false</organismsDiffer>
    <experiments>3</experiments>
</comment>
<comment type="interaction">
    <interactant intactId="EBI-12187159">
        <id>O43759-2</id>
    </interactant>
    <interactant intactId="EBI-11742770">
        <id>Q96HE8</id>
        <label>TMEM80</label>
    </interactant>
    <organismsDiffer>false</organismsDiffer>
    <experiments>3</experiments>
</comment>
<comment type="interaction">
    <interactant intactId="EBI-12187159">
        <id>O43759-2</id>
    </interactant>
    <interactant intactId="EBI-13356252">
        <id>Q86WB7-2</id>
        <label>UNC93A</label>
    </interactant>
    <organismsDiffer>false</organismsDiffer>
    <experiments>3</experiments>
</comment>
<comment type="subcellular location">
    <subcellularLocation>
        <location evidence="2">Cytoplasmic vesicle</location>
        <location evidence="2">Secretory vesicle</location>
        <location evidence="2">Synaptic vesicle membrane</location>
        <topology evidence="2">Multi-pass membrane protein</topology>
    </subcellularLocation>
    <subcellularLocation>
        <location evidence="9">Melanosome</location>
    </subcellularLocation>
    <text evidence="9">Identified by mass spectrometry in melanosome fractions from stage I to stage IV.</text>
</comment>
<comment type="alternative products">
    <event type="alternative splicing"/>
    <isoform>
        <id>O43759-1</id>
        <name>1A</name>
        <sequence type="displayed"/>
    </isoform>
    <isoform>
        <id>O43759-2</id>
        <name>1B</name>
        <sequence type="described" ref="VSP_006332"/>
    </isoform>
    <isoform>
        <id>O43759-3</id>
        <name>1C</name>
        <sequence type="described" ref="VSP_006331 VSP_006332"/>
    </isoform>
</comment>
<comment type="similarity">
    <text evidence="14">Belongs to the synaptogyrin family.</text>
</comment>
<protein>
    <recommendedName>
        <fullName evidence="14">Synaptogyrin-1</fullName>
    </recommendedName>
</protein>
<dbReference type="EMBL" id="AJ002303">
    <property type="protein sequence ID" value="CAA05320.1"/>
    <property type="molecule type" value="mRNA"/>
</dbReference>
<dbReference type="EMBL" id="AJ002304">
    <property type="protein sequence ID" value="CAA05321.1"/>
    <property type="molecule type" value="mRNA"/>
</dbReference>
<dbReference type="EMBL" id="AJ002305">
    <property type="protein sequence ID" value="CAA05322.1"/>
    <property type="molecule type" value="mRNA"/>
</dbReference>
<dbReference type="EMBL" id="CR456590">
    <property type="protein sequence ID" value="CAG30476.1"/>
    <property type="molecule type" value="mRNA"/>
</dbReference>
<dbReference type="EMBL" id="BT007135">
    <property type="protein sequence ID" value="AAP35799.1"/>
    <property type="molecule type" value="mRNA"/>
</dbReference>
<dbReference type="EMBL" id="AK289507">
    <property type="protein sequence ID" value="BAF82196.1"/>
    <property type="molecule type" value="mRNA"/>
</dbReference>
<dbReference type="EMBL" id="AL022326">
    <property type="status" value="NOT_ANNOTATED_CDS"/>
    <property type="molecule type" value="Genomic_DNA"/>
</dbReference>
<dbReference type="EMBL" id="BC000731">
    <property type="protein sequence ID" value="AAH00731.1"/>
    <property type="molecule type" value="mRNA"/>
</dbReference>
<dbReference type="CCDS" id="CCDS13989.1">
    <molecule id="O43759-1"/>
</dbReference>
<dbReference type="CCDS" id="CCDS13990.1">
    <molecule id="O43759-2"/>
</dbReference>
<dbReference type="CCDS" id="CCDS13991.1">
    <molecule id="O43759-3"/>
</dbReference>
<dbReference type="RefSeq" id="NP_004702.2">
    <molecule id="O43759-1"/>
    <property type="nucleotide sequence ID" value="NM_004711.4"/>
</dbReference>
<dbReference type="RefSeq" id="NP_663783.1">
    <molecule id="O43759-2"/>
    <property type="nucleotide sequence ID" value="NM_145731.4"/>
</dbReference>
<dbReference type="RefSeq" id="NP_663791.1">
    <molecule id="O43759-3"/>
    <property type="nucleotide sequence ID" value="NM_145738.3"/>
</dbReference>
<dbReference type="PDB" id="8A6M">
    <property type="method" value="NMR"/>
    <property type="chains" value="A=1-195"/>
</dbReference>
<dbReference type="PDBsum" id="8A6M"/>
<dbReference type="SMR" id="O43759"/>
<dbReference type="BioGRID" id="114592">
    <property type="interactions" value="123"/>
</dbReference>
<dbReference type="FunCoup" id="O43759">
    <property type="interactions" value="583"/>
</dbReference>
<dbReference type="IntAct" id="O43759">
    <property type="interactions" value="97"/>
</dbReference>
<dbReference type="MINT" id="O43759"/>
<dbReference type="STRING" id="9606.ENSP00000332287"/>
<dbReference type="GlyGen" id="O43759">
    <property type="glycosylation" value="1 site, 1 O-linked glycan (1 site)"/>
</dbReference>
<dbReference type="iPTMnet" id="O43759"/>
<dbReference type="PhosphoSitePlus" id="O43759"/>
<dbReference type="SwissPalm" id="O43759"/>
<dbReference type="BioMuta" id="SYNGR1"/>
<dbReference type="jPOST" id="O43759"/>
<dbReference type="MassIVE" id="O43759"/>
<dbReference type="PaxDb" id="9606-ENSP00000332287"/>
<dbReference type="PeptideAtlas" id="O43759"/>
<dbReference type="ProteomicsDB" id="49150">
    <molecule id="O43759-1"/>
</dbReference>
<dbReference type="ProteomicsDB" id="49151">
    <molecule id="O43759-2"/>
</dbReference>
<dbReference type="ProteomicsDB" id="49152">
    <molecule id="O43759-3"/>
</dbReference>
<dbReference type="Pumba" id="O43759"/>
<dbReference type="TopDownProteomics" id="O43759-1">
    <molecule id="O43759-1"/>
</dbReference>
<dbReference type="Antibodypedia" id="26612">
    <property type="antibodies" value="186 antibodies from 30 providers"/>
</dbReference>
<dbReference type="DNASU" id="9145"/>
<dbReference type="Ensembl" id="ENST00000318801.8">
    <molecule id="O43759-2"/>
    <property type="protein sequence ID" value="ENSP00000318845.4"/>
    <property type="gene ID" value="ENSG00000100321.15"/>
</dbReference>
<dbReference type="Ensembl" id="ENST00000328933.10">
    <molecule id="O43759-1"/>
    <property type="protein sequence ID" value="ENSP00000332287.5"/>
    <property type="gene ID" value="ENSG00000100321.15"/>
</dbReference>
<dbReference type="Ensembl" id="ENST00000381535.4">
    <molecule id="O43759-3"/>
    <property type="protein sequence ID" value="ENSP00000370946.4"/>
    <property type="gene ID" value="ENSG00000100321.15"/>
</dbReference>
<dbReference type="GeneID" id="9145"/>
<dbReference type="KEGG" id="hsa:9145"/>
<dbReference type="MANE-Select" id="ENST00000328933.10">
    <property type="protein sequence ID" value="ENSP00000332287.5"/>
    <property type="RefSeq nucleotide sequence ID" value="NM_004711.5"/>
    <property type="RefSeq protein sequence ID" value="NP_004702.2"/>
</dbReference>
<dbReference type="UCSC" id="uc003axo.5">
    <molecule id="O43759-1"/>
    <property type="organism name" value="human"/>
</dbReference>
<dbReference type="AGR" id="HGNC:11498"/>
<dbReference type="CTD" id="9145"/>
<dbReference type="DisGeNET" id="9145"/>
<dbReference type="GeneCards" id="SYNGR1"/>
<dbReference type="HGNC" id="HGNC:11498">
    <property type="gene designation" value="SYNGR1"/>
</dbReference>
<dbReference type="HPA" id="ENSG00000100321">
    <property type="expression patterns" value="Tissue enhanced (brain)"/>
</dbReference>
<dbReference type="MalaCards" id="SYNGR1"/>
<dbReference type="MIM" id="603925">
    <property type="type" value="gene"/>
</dbReference>
<dbReference type="neXtProt" id="NX_O43759"/>
<dbReference type="OpenTargets" id="ENSG00000100321"/>
<dbReference type="PharmGKB" id="PA36280"/>
<dbReference type="VEuPathDB" id="HostDB:ENSG00000100321"/>
<dbReference type="eggNOG" id="KOG4016">
    <property type="taxonomic scope" value="Eukaryota"/>
</dbReference>
<dbReference type="GeneTree" id="ENSGT00950000182935"/>
<dbReference type="HOGENOM" id="CLU_079186_0_1_1"/>
<dbReference type="InParanoid" id="O43759"/>
<dbReference type="OMA" id="WAFIWFV"/>
<dbReference type="OrthoDB" id="10041611at2759"/>
<dbReference type="PAN-GO" id="O43759">
    <property type="GO annotations" value="2 GO annotations based on evolutionary models"/>
</dbReference>
<dbReference type="PhylomeDB" id="O43759"/>
<dbReference type="TreeFam" id="TF320995"/>
<dbReference type="PathwayCommons" id="O43759"/>
<dbReference type="Reactome" id="R-HSA-6798695">
    <property type="pathway name" value="Neutrophil degranulation"/>
</dbReference>
<dbReference type="SignaLink" id="O43759"/>
<dbReference type="BioGRID-ORCS" id="9145">
    <property type="hits" value="17 hits in 1147 CRISPR screens"/>
</dbReference>
<dbReference type="ChiTaRS" id="SYNGR1">
    <property type="organism name" value="human"/>
</dbReference>
<dbReference type="GeneWiki" id="SYNGR1"/>
<dbReference type="GenomeRNAi" id="9145"/>
<dbReference type="Pharos" id="O43759">
    <property type="development level" value="Tbio"/>
</dbReference>
<dbReference type="PRO" id="PR:O43759"/>
<dbReference type="Proteomes" id="UP000005640">
    <property type="component" value="Chromosome 22"/>
</dbReference>
<dbReference type="RNAct" id="O43759">
    <property type="molecule type" value="protein"/>
</dbReference>
<dbReference type="Bgee" id="ENSG00000100321">
    <property type="expression patterns" value="Expressed in Brodmann (1909) area 10 and 204 other cell types or tissues"/>
</dbReference>
<dbReference type="ExpressionAtlas" id="O43759">
    <property type="expression patterns" value="baseline and differential"/>
</dbReference>
<dbReference type="GO" id="GO:0035577">
    <property type="term" value="C:azurophil granule membrane"/>
    <property type="evidence" value="ECO:0000304"/>
    <property type="project" value="Reactome"/>
</dbReference>
<dbReference type="GO" id="GO:0042470">
    <property type="term" value="C:melanosome"/>
    <property type="evidence" value="ECO:0007669"/>
    <property type="project" value="UniProtKB-SubCell"/>
</dbReference>
<dbReference type="GO" id="GO:0016020">
    <property type="term" value="C:membrane"/>
    <property type="evidence" value="ECO:0000303"/>
    <property type="project" value="UniProtKB"/>
</dbReference>
<dbReference type="GO" id="GO:0031594">
    <property type="term" value="C:neuromuscular junction"/>
    <property type="evidence" value="ECO:0000318"/>
    <property type="project" value="GO_Central"/>
</dbReference>
<dbReference type="GO" id="GO:0005886">
    <property type="term" value="C:plasma membrane"/>
    <property type="evidence" value="ECO:0000304"/>
    <property type="project" value="Reactome"/>
</dbReference>
<dbReference type="GO" id="GO:0098685">
    <property type="term" value="C:Schaffer collateral - CA1 synapse"/>
    <property type="evidence" value="ECO:0007669"/>
    <property type="project" value="Ensembl"/>
</dbReference>
<dbReference type="GO" id="GO:0030672">
    <property type="term" value="C:synaptic vesicle membrane"/>
    <property type="evidence" value="ECO:0000318"/>
    <property type="project" value="GO_Central"/>
</dbReference>
<dbReference type="GO" id="GO:1990830">
    <property type="term" value="P:cellular response to leukemia inhibitory factor"/>
    <property type="evidence" value="ECO:0007669"/>
    <property type="project" value="Ensembl"/>
</dbReference>
<dbReference type="GO" id="GO:0006605">
    <property type="term" value="P:protein targeting"/>
    <property type="evidence" value="ECO:0007669"/>
    <property type="project" value="Ensembl"/>
</dbReference>
<dbReference type="GO" id="GO:0045055">
    <property type="term" value="P:regulated exocytosis"/>
    <property type="evidence" value="ECO:0000250"/>
    <property type="project" value="UniProtKB"/>
</dbReference>
<dbReference type="GO" id="GO:0048169">
    <property type="term" value="P:regulation of long-term neuronal synaptic plasticity"/>
    <property type="evidence" value="ECO:0000250"/>
    <property type="project" value="UniProtKB"/>
</dbReference>
<dbReference type="GO" id="GO:0048172">
    <property type="term" value="P:regulation of short-term neuronal synaptic plasticity"/>
    <property type="evidence" value="ECO:0000250"/>
    <property type="project" value="UniProtKB"/>
</dbReference>
<dbReference type="GO" id="GO:0048499">
    <property type="term" value="P:synaptic vesicle membrane organization"/>
    <property type="evidence" value="ECO:0000250"/>
    <property type="project" value="UniProtKB"/>
</dbReference>
<dbReference type="InterPro" id="IPR008253">
    <property type="entry name" value="Marvel"/>
</dbReference>
<dbReference type="InterPro" id="IPR016579">
    <property type="entry name" value="Synaptogyrin"/>
</dbReference>
<dbReference type="PANTHER" id="PTHR10838">
    <property type="entry name" value="SYNAPTOGYRIN"/>
    <property type="match status" value="1"/>
</dbReference>
<dbReference type="PANTHER" id="PTHR10838:SF7">
    <property type="entry name" value="SYNAPTOGYRIN-1"/>
    <property type="match status" value="1"/>
</dbReference>
<dbReference type="Pfam" id="PF01284">
    <property type="entry name" value="MARVEL"/>
    <property type="match status" value="1"/>
</dbReference>
<dbReference type="PIRSF" id="PIRSF011282">
    <property type="entry name" value="Synaptogyrin"/>
    <property type="match status" value="1"/>
</dbReference>
<dbReference type="PROSITE" id="PS51225">
    <property type="entry name" value="MARVEL"/>
    <property type="match status" value="1"/>
</dbReference>
<accession>O43759</accession>
<accession>A6NP69</accession>
<accession>A8K0E2</accession>
<accession>O43757</accession>
<accession>O43758</accession>
<accession>Q53Y02</accession>
<accession>Q96J56</accession>
<accession>Q9UGZ4</accession>
<organism>
    <name type="scientific">Homo sapiens</name>
    <name type="common">Human</name>
    <dbReference type="NCBI Taxonomy" id="9606"/>
    <lineage>
        <taxon>Eukaryota</taxon>
        <taxon>Metazoa</taxon>
        <taxon>Chordata</taxon>
        <taxon>Craniata</taxon>
        <taxon>Vertebrata</taxon>
        <taxon>Euteleostomi</taxon>
        <taxon>Mammalia</taxon>
        <taxon>Eutheria</taxon>
        <taxon>Euarchontoglires</taxon>
        <taxon>Primates</taxon>
        <taxon>Haplorrhini</taxon>
        <taxon>Catarrhini</taxon>
        <taxon>Hominidae</taxon>
        <taxon>Homo</taxon>
    </lineage>
</organism>
<evidence type="ECO:0000250" key="1">
    <source>
        <dbReference type="UniProtKB" id="O55100"/>
    </source>
</evidence>
<evidence type="ECO:0000250" key="2">
    <source>
        <dbReference type="UniProtKB" id="Q62876"/>
    </source>
</evidence>
<evidence type="ECO:0000255" key="3"/>
<evidence type="ECO:0000255" key="4">
    <source>
        <dbReference type="PROSITE-ProRule" id="PRU00581"/>
    </source>
</evidence>
<evidence type="ECO:0000256" key="5">
    <source>
        <dbReference type="SAM" id="MobiDB-lite"/>
    </source>
</evidence>
<evidence type="ECO:0000269" key="6">
    <source>
    </source>
</evidence>
<evidence type="ECO:0000269" key="7">
    <source>
    </source>
</evidence>
<evidence type="ECO:0000269" key="8">
    <source>
    </source>
</evidence>
<evidence type="ECO:0000269" key="9">
    <source>
    </source>
</evidence>
<evidence type="ECO:0000269" key="10">
    <source>
    </source>
</evidence>
<evidence type="ECO:0000303" key="11">
    <source>
    </source>
</evidence>
<evidence type="ECO:0000303" key="12">
    <source>
    </source>
</evidence>
<evidence type="ECO:0000303" key="13">
    <source ref="3"/>
</evidence>
<evidence type="ECO:0000305" key="14"/>
<evidence type="ECO:0000312" key="15">
    <source>
        <dbReference type="HGNC" id="HGNC:11498"/>
    </source>
</evidence>
<evidence type="ECO:0007744" key="16">
    <source>
    </source>
</evidence>
<evidence type="ECO:0007829" key="17">
    <source>
        <dbReference type="PDB" id="8A6M"/>
    </source>
</evidence>